<comment type="function">
    <text evidence="3 4 6 7 8">Part of the ATP-binding cassette (ABC) transport system AztABCD involved in zinc import (PubMed:25787075, PubMed:26468286, PubMed:30353723, PubMed:32781785, PubMed:35128285). Binds zinc with high affinity and specificity and delivers it to the membrane permease for translocation into the cytoplasm (PubMed:25787075, PubMed:26468286, PubMed:30353723, PubMed:32781785, PubMed:35128285).</text>
</comment>
<comment type="subunit">
    <text evidence="3 4">Monomer.</text>
</comment>
<comment type="subcellular location">
    <subcellularLocation>
        <location evidence="3">Periplasm</location>
    </subcellularLocation>
</comment>
<comment type="induction">
    <text evidence="3 4">Up-regulated upon zinc starvation.</text>
</comment>
<comment type="domain">
    <text evidence="5">The D-loop is required for the efficient acquisition of Zn(2+) from chaperone AztD.</text>
</comment>
<comment type="domain">
    <text evidence="7">The Z-loop functions to lock down over the zinc binding site, decreasing the rate of zinc dissociation (PubMed:32781785). May also inhibit the formation of productive interactions with AztD for zinc transfer (PubMed:32781785).</text>
</comment>
<comment type="disruption phenotype">
    <text evidence="6">No effect on growth and no effect on zinc cellular level in zinc repleted media (PubMed:30353723). In zinc limited media, growth is reduced in a znuA mutant background and also in an znuA and aztD mutant background (PubMed:30353723). In zinc depleted media, zinc cellular levels are reduced in a znuA mutant background, an aztD mutant background and a znuA and aztD mutant background (PubMed:30353723).</text>
</comment>
<comment type="similarity">
    <text evidence="2">Belongs to the bacterial solute-binding protein 9 family.</text>
</comment>
<keyword id="KW-0002">3D-structure</keyword>
<keyword id="KW-1015">Disulfide bond</keyword>
<keyword id="KW-0406">Ion transport</keyword>
<keyword id="KW-0479">Metal-binding</keyword>
<keyword id="KW-0574">Periplasm</keyword>
<keyword id="KW-1185">Reference proteome</keyword>
<keyword id="KW-0732">Signal</keyword>
<keyword id="KW-0813">Transport</keyword>
<keyword id="KW-0862">Zinc</keyword>
<keyword id="KW-0864">Zinc transport</keyword>
<name>AZTC_PARDP</name>
<proteinExistence type="evidence at protein level"/>
<reference evidence="13" key="1">
    <citation type="submission" date="2006-12" db="EMBL/GenBank/DDBJ databases">
        <title>Complete sequence of chromosome 1 of Paracoccus denitrificans PD1222.</title>
        <authorList>
            <person name="Copeland A."/>
            <person name="Lucas S."/>
            <person name="Lapidus A."/>
            <person name="Barry K."/>
            <person name="Detter J.C."/>
            <person name="Glavina del Rio T."/>
            <person name="Hammon N."/>
            <person name="Israni S."/>
            <person name="Dalin E."/>
            <person name="Tice H."/>
            <person name="Pitluck S."/>
            <person name="Munk A.C."/>
            <person name="Brettin T."/>
            <person name="Bruce D."/>
            <person name="Han C."/>
            <person name="Tapia R."/>
            <person name="Gilna P."/>
            <person name="Schmutz J."/>
            <person name="Larimer F."/>
            <person name="Land M."/>
            <person name="Hauser L."/>
            <person name="Kyrpides N."/>
            <person name="Lykidis A."/>
            <person name="Spiro S."/>
            <person name="Richardson D.J."/>
            <person name="Moir J.W.B."/>
            <person name="Ferguson S.J."/>
            <person name="van Spanning R.J.M."/>
            <person name="Richardson P."/>
        </authorList>
    </citation>
    <scope>NUCLEOTIDE SEQUENCE [LARGE SCALE GENOMIC DNA]</scope>
    <source>
        <strain evidence="13">Pd 1222</strain>
    </source>
</reference>
<reference evidence="10" key="2">
    <citation type="journal article" date="2015" name="J. Biol. Chem.">
        <title>Transcriptional Regulation, Metal Binding Properties and Structure of Pden1597, an Unusual Zinc Transport Protein from Paracoccus denitrificans.</title>
        <authorList>
            <person name="Handali M."/>
            <person name="Neupane D.P."/>
            <person name="Roychowdhury H."/>
            <person name="Yukl E.T."/>
        </authorList>
    </citation>
    <scope>FUNCTION</scope>
    <scope>SUBUNIT</scope>
    <scope>SUBCELLULAR LOCATION</scope>
    <scope>INDUCTION</scope>
</reference>
<reference evidence="10" key="3">
    <citation type="journal article" date="2015" name="J. Biol. Chem.">
        <title>AztD, a Periplasmic Zinc Metallochaperone to an ATP-binding Cassette (ABC) Transporter System in Paracoccus denitrificans.</title>
        <authorList>
            <person name="Handali M."/>
            <person name="Roychowdhury H."/>
            <person name="Neupane D.P."/>
            <person name="Yukl E.T."/>
        </authorList>
    </citation>
    <scope>FUNCTION</scope>
    <scope>SUBUNIT</scope>
    <scope>INDUCTION</scope>
</reference>
<reference evidence="10" key="4">
    <citation type="journal article" date="2019" name="Biochemistry">
        <title>Two ABC Transporters and a Periplasmic Metallochaperone Participate in Zinc Acquisition in Paracoccus denitrificans.</title>
        <authorList>
            <person name="Neupane D.P."/>
            <person name="Kumar S."/>
            <person name="Yukl E.T."/>
        </authorList>
    </citation>
    <scope>FUNCTION</scope>
    <scope>DISRUPTION PHENOTYPE</scope>
</reference>
<reference evidence="10" key="5">
    <citation type="journal article" date="2022" name="ACS Omega">
        <title>Contributions of Conformational Flexibility to High-Affinity Zinc Binding in the Solute Binding Protein AztC.</title>
        <authorList>
            <person name="Serrano F.A."/>
            <person name="Yukl E.T."/>
        </authorList>
    </citation>
    <scope>FUNCTION</scope>
    <scope>MUTAGENESIS OF HIS-138 AND HIS-204</scope>
</reference>
<reference evidence="14 15 16" key="6">
    <citation type="journal article" date="2017" name="J. Biol. Chem.">
        <title>Mechanisms of zinc binding to the solute-binding protein AztC and transfer from the metallochaperone AztD.</title>
        <authorList>
            <person name="Neupane D.P."/>
            <person name="Avalos D."/>
            <person name="Fullam S."/>
            <person name="Roychowdhury H."/>
            <person name="Yukl E.T."/>
        </authorList>
    </citation>
    <scope>X-RAY CRYSTALLOGRAPHY (2.03 ANGSTROMS) OF 24-309 IN COMPLEX WITH ZINC</scope>
    <scope>DOMAIN</scope>
    <scope>DISULFIDE BOND</scope>
    <scope>MUTAGENESIS OF 120-HIS--ALA-132; HIS-120; TYR-121; HIS-122; ASP-125; HIS-131 AND 222-GLN--GLU-229</scope>
</reference>
<reference evidence="17" key="7">
    <citation type="journal article" date="2020" name="Biomolecules">
        <title>Structural Features Mediating Zinc Binding and Transfer in the AztABCD Zinc Transporter System.</title>
        <authorList>
            <person name="Meni A."/>
            <person name="Yukl E.T."/>
        </authorList>
    </citation>
    <scope>X-RAY CRYSTALLOGRAPHY (2.26 ANGSTROMS) IN COMPLEX WITH ZINC</scope>
    <scope>FUNCTION</scope>
    <scope>DOMAIN</scope>
    <scope>DISULFIDE BOND</scope>
    <scope>MUTAGENESIS OF 120-HIS--ALA-132; HIS-138; HIS-204 AND 222-GLN--GLU-229</scope>
</reference>
<accession>A1B2F3</accession>
<dbReference type="EMBL" id="CP000489">
    <property type="protein sequence ID" value="ABL69697.1"/>
    <property type="molecule type" value="Genomic_DNA"/>
</dbReference>
<dbReference type="RefSeq" id="WP_011747896.1">
    <property type="nucleotide sequence ID" value="NC_008686.1"/>
</dbReference>
<dbReference type="PDB" id="5KZJ">
    <property type="method" value="X-ray"/>
    <property type="resolution" value="2.20 A"/>
    <property type="chains" value="A/B=1-309"/>
</dbReference>
<dbReference type="PDB" id="5W56">
    <property type="method" value="X-ray"/>
    <property type="resolution" value="2.03 A"/>
    <property type="chains" value="A/B=24-309"/>
</dbReference>
<dbReference type="PDB" id="5W57">
    <property type="method" value="X-ray"/>
    <property type="resolution" value="2.30 A"/>
    <property type="chains" value="A/B=24-309"/>
</dbReference>
<dbReference type="PDB" id="6XPN">
    <property type="method" value="X-ray"/>
    <property type="resolution" value="2.26 A"/>
    <property type="chains" value="A/B=1-309"/>
</dbReference>
<dbReference type="PDBsum" id="5KZJ"/>
<dbReference type="PDBsum" id="5W56"/>
<dbReference type="PDBsum" id="5W57"/>
<dbReference type="PDBsum" id="6XPN"/>
<dbReference type="SMR" id="A1B2F3"/>
<dbReference type="STRING" id="318586.Pden_1597"/>
<dbReference type="TCDB" id="3.A.1.15.19">
    <property type="family name" value="the atp-binding cassette (abc) superfamily"/>
</dbReference>
<dbReference type="EnsemblBacteria" id="ABL69697">
    <property type="protein sequence ID" value="ABL69697"/>
    <property type="gene ID" value="Pden_1597"/>
</dbReference>
<dbReference type="GeneID" id="93449990"/>
<dbReference type="KEGG" id="pde:Pden_1597"/>
<dbReference type="eggNOG" id="COG0803">
    <property type="taxonomic scope" value="Bacteria"/>
</dbReference>
<dbReference type="HOGENOM" id="CLU_016838_1_1_5"/>
<dbReference type="OrthoDB" id="9793396at2"/>
<dbReference type="Proteomes" id="UP000000361">
    <property type="component" value="Chromosome 1"/>
</dbReference>
<dbReference type="GO" id="GO:0042597">
    <property type="term" value="C:periplasmic space"/>
    <property type="evidence" value="ECO:0000314"/>
    <property type="project" value="UniProtKB"/>
</dbReference>
<dbReference type="GO" id="GO:0008270">
    <property type="term" value="F:zinc ion binding"/>
    <property type="evidence" value="ECO:0000314"/>
    <property type="project" value="UniProtKB"/>
</dbReference>
<dbReference type="GO" id="GO:0007155">
    <property type="term" value="P:cell adhesion"/>
    <property type="evidence" value="ECO:0007669"/>
    <property type="project" value="InterPro"/>
</dbReference>
<dbReference type="GO" id="GO:0006829">
    <property type="term" value="P:zinc ion transport"/>
    <property type="evidence" value="ECO:0007669"/>
    <property type="project" value="UniProtKB-KW"/>
</dbReference>
<dbReference type="Gene3D" id="3.40.50.1980">
    <property type="entry name" value="Nitrogenase molybdenum iron protein domain"/>
    <property type="match status" value="2"/>
</dbReference>
<dbReference type="InterPro" id="IPR006129">
    <property type="entry name" value="AdhesinB"/>
</dbReference>
<dbReference type="InterPro" id="IPR047701">
    <property type="entry name" value="AztC-like"/>
</dbReference>
<dbReference type="InterPro" id="IPR050492">
    <property type="entry name" value="Bact_metal-bind_prot9"/>
</dbReference>
<dbReference type="InterPro" id="IPR006128">
    <property type="entry name" value="Lipoprotein_PsaA-like"/>
</dbReference>
<dbReference type="InterPro" id="IPR006127">
    <property type="entry name" value="ZnuA-like"/>
</dbReference>
<dbReference type="NCBIfam" id="NF040870">
    <property type="entry name" value="AztC"/>
    <property type="match status" value="1"/>
</dbReference>
<dbReference type="PANTHER" id="PTHR42953">
    <property type="entry name" value="HIGH-AFFINITY ZINC UPTAKE SYSTEM PROTEIN ZNUA-RELATED"/>
    <property type="match status" value="1"/>
</dbReference>
<dbReference type="PANTHER" id="PTHR42953:SF1">
    <property type="entry name" value="METAL-BINDING PROTEIN HI_0362-RELATED"/>
    <property type="match status" value="1"/>
</dbReference>
<dbReference type="Pfam" id="PF01297">
    <property type="entry name" value="ZnuA"/>
    <property type="match status" value="1"/>
</dbReference>
<dbReference type="PRINTS" id="PR00691">
    <property type="entry name" value="ADHESINB"/>
</dbReference>
<dbReference type="PRINTS" id="PR00690">
    <property type="entry name" value="ADHESNFAMILY"/>
</dbReference>
<dbReference type="SUPFAM" id="SSF53807">
    <property type="entry name" value="Helical backbone' metal receptor"/>
    <property type="match status" value="1"/>
</dbReference>
<feature type="signal peptide" evidence="11">
    <location>
        <begin position="1"/>
        <end position="24"/>
    </location>
</feature>
<feature type="chain" id="PRO_5002632199" description="High-affinity zinc uptake system protein AztC" evidence="1">
    <location>
        <begin position="25"/>
        <end position="309"/>
    </location>
</feature>
<feature type="region of interest" description="D-loop" evidence="5">
    <location>
        <begin position="117"/>
        <end position="132"/>
    </location>
</feature>
<feature type="region of interest" description="Z-loop" evidence="5">
    <location>
        <begin position="222"/>
        <end position="229"/>
    </location>
</feature>
<feature type="binding site" evidence="5 7 14 16 17">
    <location>
        <position position="61"/>
    </location>
    <ligand>
        <name>Zn(2+)</name>
        <dbReference type="ChEBI" id="CHEBI:29105"/>
    </ligand>
</feature>
<feature type="binding site" evidence="5 14 16">
    <location>
        <position position="138"/>
    </location>
    <ligand>
        <name>Zn(2+)</name>
        <dbReference type="ChEBI" id="CHEBI:29105"/>
    </ligand>
</feature>
<feature type="binding site" evidence="5 7 14 16 17">
    <location>
        <position position="204"/>
    </location>
    <ligand>
        <name>Zn(2+)</name>
        <dbReference type="ChEBI" id="CHEBI:29105"/>
    </ligand>
</feature>
<feature type="binding site" evidence="5 7 14 16 17">
    <location>
        <position position="279"/>
    </location>
    <ligand>
        <name>Zn(2+)</name>
        <dbReference type="ChEBI" id="CHEBI:29105"/>
    </ligand>
</feature>
<feature type="disulfide bond" evidence="5 7 14 15 16 17">
    <location>
        <begin position="158"/>
        <end position="165"/>
    </location>
</feature>
<feature type="mutagenesis site" description="Impaired zinc acquisition from chaperone AztD. No defect in zinc binding from solution." evidence="5 7">
    <location>
        <begin position="120"/>
        <end position="132"/>
    </location>
</feature>
<feature type="mutagenesis site" description="Impaired zinc acquisition from chaperone AztD. No defect in zinc binding from solution." evidence="5">
    <original>H</original>
    <variation>A</variation>
    <location>
        <position position="120"/>
    </location>
</feature>
<feature type="mutagenesis site" description="No defect in zinc binding from solution. No defect in zinc acquisition from chaperone AztD." evidence="5">
    <original>Y</original>
    <variation>A</variation>
    <location>
        <position position="121"/>
    </location>
</feature>
<feature type="mutagenesis site" description="Impaired zinc acquisition from chaperone AztD. No defect in zinc binding from solution." evidence="5">
    <original>H</original>
    <variation>A</variation>
    <location>
        <position position="122"/>
    </location>
</feature>
<feature type="mutagenesis site" description="No defect in zinc binding from solution. No defect in zinc acquisition from chaperone AztD." evidence="5">
    <original>D</original>
    <variation>A</variation>
    <location>
        <position position="125"/>
    </location>
</feature>
<feature type="mutagenesis site" description="Impaired zinc acquisition from chaperone AztD. No defect in zinc binding from solution." evidence="5">
    <original>H</original>
    <variation>A</variation>
    <location>
        <position position="131"/>
    </location>
</feature>
<feature type="mutagenesis site" description="600-fold increase in zinc dissociation rate but no effect on zinc acquisition from chaperone AztD; when associated with A-204." evidence="7 8">
    <original>H</original>
    <variation>A</variation>
    <location>
        <position position="138"/>
    </location>
</feature>
<feature type="mutagenesis site" description="600-fold increase in zinc dissociation rate but no effect on zinc acquisition from chaperone AztD; when associated with A-138." evidence="7 8">
    <original>H</original>
    <variation>A</variation>
    <location>
        <position position="204"/>
    </location>
</feature>
<feature type="mutagenesis site" description="No defect in zinc binding from solution. No defect in zinc acquisition from chaperone AztD. 6-fold increase in zinc dissociation rate." evidence="5 7">
    <location>
        <begin position="222"/>
        <end position="229"/>
    </location>
</feature>
<feature type="strand" evidence="19">
    <location>
        <begin position="27"/>
        <end position="33"/>
    </location>
</feature>
<feature type="helix" evidence="19">
    <location>
        <begin position="34"/>
        <end position="44"/>
    </location>
</feature>
<feature type="helix" evidence="19">
    <location>
        <begin position="45"/>
        <end position="47"/>
    </location>
</feature>
<feature type="strand" evidence="19">
    <location>
        <begin position="48"/>
        <end position="54"/>
    </location>
</feature>
<feature type="strand" evidence="19">
    <location>
        <begin position="59"/>
        <end position="62"/>
    </location>
</feature>
<feature type="helix" evidence="19">
    <location>
        <begin position="69"/>
        <end position="74"/>
    </location>
</feature>
<feature type="strand" evidence="19">
    <location>
        <begin position="77"/>
        <end position="84"/>
    </location>
</feature>
<feature type="helix" evidence="19">
    <location>
        <begin position="87"/>
        <end position="97"/>
    </location>
</feature>
<feature type="strand" evidence="19">
    <location>
        <begin position="102"/>
        <end position="105"/>
    </location>
</feature>
<feature type="turn" evidence="19">
    <location>
        <begin position="106"/>
        <end position="109"/>
    </location>
</feature>
<feature type="strand" evidence="18">
    <location>
        <begin position="116"/>
        <end position="119"/>
    </location>
</feature>
<feature type="strand" evidence="20">
    <location>
        <begin position="124"/>
        <end position="128"/>
    </location>
</feature>
<feature type="helix" evidence="19">
    <location>
        <begin position="139"/>
        <end position="141"/>
    </location>
</feature>
<feature type="helix" evidence="19">
    <location>
        <begin position="143"/>
        <end position="160"/>
    </location>
</feature>
<feature type="helix" evidence="19">
    <location>
        <begin position="162"/>
        <end position="164"/>
    </location>
</feature>
<feature type="helix" evidence="19">
    <location>
        <begin position="165"/>
        <end position="191"/>
    </location>
</feature>
<feature type="strand" evidence="19">
    <location>
        <begin position="199"/>
        <end position="204"/>
    </location>
</feature>
<feature type="helix" evidence="19">
    <location>
        <begin position="208"/>
        <end position="213"/>
    </location>
</feature>
<feature type="strand" evidence="19">
    <location>
        <begin position="217"/>
        <end position="219"/>
    </location>
</feature>
<feature type="strand" evidence="19">
    <location>
        <begin position="226"/>
        <end position="229"/>
    </location>
</feature>
<feature type="helix" evidence="18">
    <location>
        <begin position="232"/>
        <end position="234"/>
    </location>
</feature>
<feature type="helix" evidence="19">
    <location>
        <begin position="235"/>
        <end position="245"/>
    </location>
</feature>
<feature type="strand" evidence="19">
    <location>
        <begin position="249"/>
        <end position="252"/>
    </location>
</feature>
<feature type="strand" evidence="19">
    <location>
        <begin position="254"/>
        <end position="256"/>
    </location>
</feature>
<feature type="helix" evidence="19">
    <location>
        <begin position="259"/>
        <end position="268"/>
    </location>
</feature>
<feature type="strand" evidence="19">
    <location>
        <begin position="272"/>
        <end position="275"/>
    </location>
</feature>
<feature type="helix" evidence="19">
    <location>
        <begin position="291"/>
        <end position="308"/>
    </location>
</feature>
<sequence>MKDWLFRIATCSIMTFSSLAAAQAEPLDVVATFSIIGDFAAKVGGDRIRLNVLVGPDSDTHVYEPRPADAIALAGADVVLTNGLEFEGFLTRLIAASGTDAAVATLTDGVETMEEPGGGHYHYIDGKAVFHAGAHDPHAWQAVPNAKVYVQNIAAAFCAADAEGCAAYQANAARYIGELDALDTEIRAAIAALPQDRRTVVVAHNAFRYFEAAYGVHFLSPQGVSTESEAAAADVAGLIREIRARNASAIFAENISDTRLLEQIAREAGLPLAGTLYSDALSGPDGPASNYIAMMRHNAGAIAAALAAR</sequence>
<protein>
    <recommendedName>
        <fullName evidence="10">High-affinity zinc uptake system protein AztC</fullName>
    </recommendedName>
</protein>
<organism evidence="13">
    <name type="scientific">Paracoccus denitrificans (strain Pd 1222)</name>
    <dbReference type="NCBI Taxonomy" id="318586"/>
    <lineage>
        <taxon>Bacteria</taxon>
        <taxon>Pseudomonadati</taxon>
        <taxon>Pseudomonadota</taxon>
        <taxon>Alphaproteobacteria</taxon>
        <taxon>Rhodobacterales</taxon>
        <taxon>Paracoccaceae</taxon>
        <taxon>Paracoccus</taxon>
    </lineage>
</organism>
<evidence type="ECO:0000255" key="1"/>
<evidence type="ECO:0000255" key="2">
    <source>
        <dbReference type="RuleBase" id="RU003512"/>
    </source>
</evidence>
<evidence type="ECO:0000269" key="3">
    <source>
    </source>
</evidence>
<evidence type="ECO:0000269" key="4">
    <source>
    </source>
</evidence>
<evidence type="ECO:0000269" key="5">
    <source>
    </source>
</evidence>
<evidence type="ECO:0000269" key="6">
    <source>
    </source>
</evidence>
<evidence type="ECO:0000269" key="7">
    <source>
    </source>
</evidence>
<evidence type="ECO:0000269" key="8">
    <source>
    </source>
</evidence>
<evidence type="ECO:0000303" key="9">
    <source>
    </source>
</evidence>
<evidence type="ECO:0000305" key="10"/>
<evidence type="ECO:0000305" key="11">
    <source>
    </source>
</evidence>
<evidence type="ECO:0000312" key="12">
    <source>
        <dbReference type="EMBL" id="ABL69697.1"/>
    </source>
</evidence>
<evidence type="ECO:0000312" key="13">
    <source>
        <dbReference type="Proteomes" id="UP000000361"/>
    </source>
</evidence>
<evidence type="ECO:0007744" key="14">
    <source>
        <dbReference type="PDB" id="5KZJ"/>
    </source>
</evidence>
<evidence type="ECO:0007744" key="15">
    <source>
        <dbReference type="PDB" id="5W56"/>
    </source>
</evidence>
<evidence type="ECO:0007744" key="16">
    <source>
        <dbReference type="PDB" id="5W57"/>
    </source>
</evidence>
<evidence type="ECO:0007744" key="17">
    <source>
        <dbReference type="PDB" id="6XPN"/>
    </source>
</evidence>
<evidence type="ECO:0007829" key="18">
    <source>
        <dbReference type="PDB" id="5KZJ"/>
    </source>
</evidence>
<evidence type="ECO:0007829" key="19">
    <source>
        <dbReference type="PDB" id="5W56"/>
    </source>
</evidence>
<evidence type="ECO:0007829" key="20">
    <source>
        <dbReference type="PDB" id="5W57"/>
    </source>
</evidence>
<gene>
    <name evidence="9" type="primary">aztC</name>
    <name evidence="12" type="ordered locus">Pden_1597</name>
</gene>